<feature type="chain" id="PRO_1000018872" description="Bifunctional purine biosynthesis protein PurH">
    <location>
        <begin position="1"/>
        <end position="521"/>
    </location>
</feature>
<feature type="domain" description="MGS-like" evidence="2">
    <location>
        <begin position="1"/>
        <end position="149"/>
    </location>
</feature>
<name>PUR9_CHLPD</name>
<sequence length="521" mass="57053">MSDPVIKRALVSVSDKTGIVDFCRELSLLGVEVFSTGGTLKTLQDAGIAAASISTITGFPEIMDGRVKTLHPKIHGGLLAVRENPDHVNQANENGISFIDLVVVNLYPFEATVAKPDVTFEDAIENIDIGGPSMLRSAAKNNESVTVVTDSADYALVLQEMRNNNGATKRETRLALALKVFELTSRYDRAIASYLAGAQHEADSSMTVKLERELDMRYGENPHQSAGLYRLTDENGTRSFSDYFEKLHGKELSYNNMLDIAAAVSLIEEFRGEEPTVVIIKHTNPCGVAQAPTLAEAYRRAFSTDTQAPFGGIIAFNHPLDMEAATAVNEIFTEILIAPAFEDGVLEMLMKKKDRRLVRQTSALPKGGWEFKSTPFGMLVQERDSKIVTKEDLTVVTKRQPTEEEVADMMFAWKICKHIKSNTILYVKNRQTFGVGAGQMSRVDSSKIARWKASEVNLDLHGSVVASDAFFPFADGLLAAAEAGVTAVIQPGGSIRDNEVIEAADANNLAMVFTGMRHFKH</sequence>
<evidence type="ECO:0000255" key="1">
    <source>
        <dbReference type="HAMAP-Rule" id="MF_00139"/>
    </source>
</evidence>
<evidence type="ECO:0000255" key="2">
    <source>
        <dbReference type="PROSITE-ProRule" id="PRU01202"/>
    </source>
</evidence>
<accession>A1BE85</accession>
<proteinExistence type="inferred from homology"/>
<protein>
    <recommendedName>
        <fullName evidence="1">Bifunctional purine biosynthesis protein PurH</fullName>
    </recommendedName>
    <domain>
        <recommendedName>
            <fullName evidence="1">Phosphoribosylaminoimidazolecarboxamide formyltransferase</fullName>
            <ecNumber evidence="1">2.1.2.3</ecNumber>
        </recommendedName>
        <alternativeName>
            <fullName evidence="1">AICAR transformylase</fullName>
        </alternativeName>
    </domain>
    <domain>
        <recommendedName>
            <fullName evidence="1">IMP cyclohydrolase</fullName>
            <ecNumber evidence="1">3.5.4.10</ecNumber>
        </recommendedName>
        <alternativeName>
            <fullName evidence="1">ATIC</fullName>
        </alternativeName>
        <alternativeName>
            <fullName evidence="1">IMP synthase</fullName>
        </alternativeName>
        <alternativeName>
            <fullName evidence="1">Inosinicase</fullName>
        </alternativeName>
    </domain>
</protein>
<comment type="catalytic activity">
    <reaction evidence="1">
        <text>(6R)-10-formyltetrahydrofolate + 5-amino-1-(5-phospho-beta-D-ribosyl)imidazole-4-carboxamide = 5-formamido-1-(5-phospho-D-ribosyl)imidazole-4-carboxamide + (6S)-5,6,7,8-tetrahydrofolate</text>
        <dbReference type="Rhea" id="RHEA:22192"/>
        <dbReference type="ChEBI" id="CHEBI:57453"/>
        <dbReference type="ChEBI" id="CHEBI:58467"/>
        <dbReference type="ChEBI" id="CHEBI:58475"/>
        <dbReference type="ChEBI" id="CHEBI:195366"/>
        <dbReference type="EC" id="2.1.2.3"/>
    </reaction>
</comment>
<comment type="catalytic activity">
    <reaction evidence="1">
        <text>IMP + H2O = 5-formamido-1-(5-phospho-D-ribosyl)imidazole-4-carboxamide</text>
        <dbReference type="Rhea" id="RHEA:18445"/>
        <dbReference type="ChEBI" id="CHEBI:15377"/>
        <dbReference type="ChEBI" id="CHEBI:58053"/>
        <dbReference type="ChEBI" id="CHEBI:58467"/>
        <dbReference type="EC" id="3.5.4.10"/>
    </reaction>
</comment>
<comment type="pathway">
    <text evidence="1">Purine metabolism; IMP biosynthesis via de novo pathway; 5-formamido-1-(5-phospho-D-ribosyl)imidazole-4-carboxamide from 5-amino-1-(5-phospho-D-ribosyl)imidazole-4-carboxamide (10-formyl THF route): step 1/1.</text>
</comment>
<comment type="pathway">
    <text evidence="1">Purine metabolism; IMP biosynthesis via de novo pathway; IMP from 5-formamido-1-(5-phospho-D-ribosyl)imidazole-4-carboxamide: step 1/1.</text>
</comment>
<comment type="domain">
    <text evidence="1">The IMP cyclohydrolase activity resides in the N-terminal region.</text>
</comment>
<comment type="similarity">
    <text evidence="1">Belongs to the PurH family.</text>
</comment>
<organism>
    <name type="scientific">Chlorobium phaeobacteroides (strain DSM 266 / SMG 266 / 2430)</name>
    <dbReference type="NCBI Taxonomy" id="290317"/>
    <lineage>
        <taxon>Bacteria</taxon>
        <taxon>Pseudomonadati</taxon>
        <taxon>Chlorobiota</taxon>
        <taxon>Chlorobiia</taxon>
        <taxon>Chlorobiales</taxon>
        <taxon>Chlorobiaceae</taxon>
        <taxon>Chlorobium/Pelodictyon group</taxon>
        <taxon>Chlorobium</taxon>
    </lineage>
</organism>
<reference key="1">
    <citation type="submission" date="2006-12" db="EMBL/GenBank/DDBJ databases">
        <title>Complete sequence of Chlorobium phaeobacteroides DSM 266.</title>
        <authorList>
            <consortium name="US DOE Joint Genome Institute"/>
            <person name="Copeland A."/>
            <person name="Lucas S."/>
            <person name="Lapidus A."/>
            <person name="Barry K."/>
            <person name="Detter J.C."/>
            <person name="Glavina del Rio T."/>
            <person name="Hammon N."/>
            <person name="Israni S."/>
            <person name="Pitluck S."/>
            <person name="Goltsman E."/>
            <person name="Schmutz J."/>
            <person name="Larimer F."/>
            <person name="Land M."/>
            <person name="Hauser L."/>
            <person name="Mikhailova N."/>
            <person name="Li T."/>
            <person name="Overmann J."/>
            <person name="Bryant D.A."/>
            <person name="Richardson P."/>
        </authorList>
    </citation>
    <scope>NUCLEOTIDE SEQUENCE [LARGE SCALE GENOMIC DNA]</scope>
    <source>
        <strain>DSM 266 / SMG 266 / 2430</strain>
    </source>
</reference>
<dbReference type="EC" id="2.1.2.3" evidence="1"/>
<dbReference type="EC" id="3.5.4.10" evidence="1"/>
<dbReference type="EMBL" id="CP000492">
    <property type="protein sequence ID" value="ABL64712.1"/>
    <property type="molecule type" value="Genomic_DNA"/>
</dbReference>
<dbReference type="RefSeq" id="WP_011744542.1">
    <property type="nucleotide sequence ID" value="NC_008639.1"/>
</dbReference>
<dbReference type="SMR" id="A1BE85"/>
<dbReference type="STRING" id="290317.Cpha266_0657"/>
<dbReference type="KEGG" id="cph:Cpha266_0657"/>
<dbReference type="eggNOG" id="COG0138">
    <property type="taxonomic scope" value="Bacteria"/>
</dbReference>
<dbReference type="HOGENOM" id="CLU_016316_5_2_10"/>
<dbReference type="OrthoDB" id="9802065at2"/>
<dbReference type="UniPathway" id="UPA00074">
    <property type="reaction ID" value="UER00133"/>
</dbReference>
<dbReference type="UniPathway" id="UPA00074">
    <property type="reaction ID" value="UER00135"/>
</dbReference>
<dbReference type="Proteomes" id="UP000008701">
    <property type="component" value="Chromosome"/>
</dbReference>
<dbReference type="GO" id="GO:0005829">
    <property type="term" value="C:cytosol"/>
    <property type="evidence" value="ECO:0007669"/>
    <property type="project" value="TreeGrafter"/>
</dbReference>
<dbReference type="GO" id="GO:0003937">
    <property type="term" value="F:IMP cyclohydrolase activity"/>
    <property type="evidence" value="ECO:0007669"/>
    <property type="project" value="UniProtKB-UniRule"/>
</dbReference>
<dbReference type="GO" id="GO:0004643">
    <property type="term" value="F:phosphoribosylaminoimidazolecarboxamide formyltransferase activity"/>
    <property type="evidence" value="ECO:0007669"/>
    <property type="project" value="UniProtKB-UniRule"/>
</dbReference>
<dbReference type="GO" id="GO:0006189">
    <property type="term" value="P:'de novo' IMP biosynthetic process"/>
    <property type="evidence" value="ECO:0007669"/>
    <property type="project" value="UniProtKB-UniRule"/>
</dbReference>
<dbReference type="CDD" id="cd01421">
    <property type="entry name" value="IMPCH"/>
    <property type="match status" value="1"/>
</dbReference>
<dbReference type="FunFam" id="3.40.140.20:FF:000001">
    <property type="entry name" value="Bifunctional purine biosynthesis protein PurH"/>
    <property type="match status" value="1"/>
</dbReference>
<dbReference type="FunFam" id="3.40.50.1380:FF:000001">
    <property type="entry name" value="Bifunctional purine biosynthesis protein PurH"/>
    <property type="match status" value="1"/>
</dbReference>
<dbReference type="Gene3D" id="3.40.140.20">
    <property type="match status" value="2"/>
</dbReference>
<dbReference type="Gene3D" id="3.40.50.1380">
    <property type="entry name" value="Methylglyoxal synthase-like domain"/>
    <property type="match status" value="1"/>
</dbReference>
<dbReference type="HAMAP" id="MF_00139">
    <property type="entry name" value="PurH"/>
    <property type="match status" value="1"/>
</dbReference>
<dbReference type="InterPro" id="IPR024051">
    <property type="entry name" value="AICAR_Tfase_dup_dom_sf"/>
</dbReference>
<dbReference type="InterPro" id="IPR016193">
    <property type="entry name" value="Cytidine_deaminase-like"/>
</dbReference>
<dbReference type="InterPro" id="IPR011607">
    <property type="entry name" value="MGS-like_dom"/>
</dbReference>
<dbReference type="InterPro" id="IPR036914">
    <property type="entry name" value="MGS-like_dom_sf"/>
</dbReference>
<dbReference type="InterPro" id="IPR002695">
    <property type="entry name" value="PurH-like"/>
</dbReference>
<dbReference type="NCBIfam" id="NF002049">
    <property type="entry name" value="PRK00881.1"/>
    <property type="match status" value="1"/>
</dbReference>
<dbReference type="NCBIfam" id="TIGR00355">
    <property type="entry name" value="purH"/>
    <property type="match status" value="1"/>
</dbReference>
<dbReference type="PANTHER" id="PTHR11692:SF0">
    <property type="entry name" value="BIFUNCTIONAL PURINE BIOSYNTHESIS PROTEIN ATIC"/>
    <property type="match status" value="1"/>
</dbReference>
<dbReference type="PANTHER" id="PTHR11692">
    <property type="entry name" value="BIFUNCTIONAL PURINE BIOSYNTHESIS PROTEIN PURH"/>
    <property type="match status" value="1"/>
</dbReference>
<dbReference type="Pfam" id="PF01808">
    <property type="entry name" value="AICARFT_IMPCHas"/>
    <property type="match status" value="1"/>
</dbReference>
<dbReference type="Pfam" id="PF02142">
    <property type="entry name" value="MGS"/>
    <property type="match status" value="1"/>
</dbReference>
<dbReference type="PIRSF" id="PIRSF000414">
    <property type="entry name" value="AICARFT_IMPCHas"/>
    <property type="match status" value="1"/>
</dbReference>
<dbReference type="SMART" id="SM00798">
    <property type="entry name" value="AICARFT_IMPCHas"/>
    <property type="match status" value="1"/>
</dbReference>
<dbReference type="SMART" id="SM00851">
    <property type="entry name" value="MGS"/>
    <property type="match status" value="1"/>
</dbReference>
<dbReference type="SUPFAM" id="SSF53927">
    <property type="entry name" value="Cytidine deaminase-like"/>
    <property type="match status" value="1"/>
</dbReference>
<dbReference type="SUPFAM" id="SSF52335">
    <property type="entry name" value="Methylglyoxal synthase-like"/>
    <property type="match status" value="1"/>
</dbReference>
<dbReference type="PROSITE" id="PS51855">
    <property type="entry name" value="MGS"/>
    <property type="match status" value="1"/>
</dbReference>
<keyword id="KW-0378">Hydrolase</keyword>
<keyword id="KW-0511">Multifunctional enzyme</keyword>
<keyword id="KW-0658">Purine biosynthesis</keyword>
<keyword id="KW-1185">Reference proteome</keyword>
<keyword id="KW-0808">Transferase</keyword>
<gene>
    <name evidence="1" type="primary">purH</name>
    <name type="ordered locus">Cpha266_0657</name>
</gene>